<organism>
    <name type="scientific">Streptococcus pyogenes serotype M3 (strain SSI-1)</name>
    <dbReference type="NCBI Taxonomy" id="193567"/>
    <lineage>
        <taxon>Bacteria</taxon>
        <taxon>Bacillati</taxon>
        <taxon>Bacillota</taxon>
        <taxon>Bacilli</taxon>
        <taxon>Lactobacillales</taxon>
        <taxon>Streptococcaceae</taxon>
        <taxon>Streptococcus</taxon>
    </lineage>
</organism>
<comment type="catalytic activity">
    <reaction>
        <text>alpha-D-glucose 1-phosphate + UTP + H(+) = UDP-alpha-D-glucose + diphosphate</text>
        <dbReference type="Rhea" id="RHEA:19889"/>
        <dbReference type="ChEBI" id="CHEBI:15378"/>
        <dbReference type="ChEBI" id="CHEBI:33019"/>
        <dbReference type="ChEBI" id="CHEBI:46398"/>
        <dbReference type="ChEBI" id="CHEBI:58601"/>
        <dbReference type="ChEBI" id="CHEBI:58885"/>
        <dbReference type="EC" id="2.7.7.9"/>
    </reaction>
</comment>
<comment type="pathway">
    <text>Carbohydrate metabolism; nucleotide-sugar metabolism.</text>
</comment>
<comment type="similarity">
    <text evidence="1">Belongs to the UDPGP type 2 family.</text>
</comment>
<reference key="1">
    <citation type="journal article" date="2003" name="Genome Res.">
        <title>Genome sequence of an M3 strain of Streptococcus pyogenes reveals a large-scale genomic rearrangement in invasive strains and new insights into phage evolution.</title>
        <authorList>
            <person name="Nakagawa I."/>
            <person name="Kurokawa K."/>
            <person name="Yamashita A."/>
            <person name="Nakata M."/>
            <person name="Tomiyasu Y."/>
            <person name="Okahashi N."/>
            <person name="Kawabata S."/>
            <person name="Yamazaki K."/>
            <person name="Shiba T."/>
            <person name="Yasunaga T."/>
            <person name="Hayashi H."/>
            <person name="Hattori M."/>
            <person name="Hamada S."/>
        </authorList>
    </citation>
    <scope>NUCLEOTIDE SEQUENCE [LARGE SCALE GENOMIC DNA]</scope>
    <source>
        <strain>SSI-1</strain>
    </source>
</reference>
<feature type="chain" id="PRO_0000411625" description="UTP--glucose-1-phosphate uridylyltransferase 1">
    <location>
        <begin position="1"/>
        <end position="304"/>
    </location>
</feature>
<sequence length="304" mass="33706">MTKVRKAIIPAAGLGTRFLPATKALAKEMLPIVDKPTIQFIVEEALKSGIEEILVVTGKAKRSIEDHFDSNFELEYNLQAKGKNELLKLVDETTAINLHFIRQSHPRGLGDAVLQAKAFVGNEPFVVMLGDDLMDITNASAKPLTKQLMEDYDKTHASTIAVMKVPHEDVSSYGVIAPQGKAVKGLYSVDTFVEKPQPEDAPSDLAIIGRYLLTPEIFDILERQVPGAGNEVQLTDAIDTLNKTQRVFAREFKGNRYDVGDKFGFMKTSIDYALEHPQVKEDLKNYIIKLGKALEKSKVPTHSK</sequence>
<gene>
    <name type="primary">hasC1</name>
    <name type="synonym">hasC</name>
    <name type="ordered locus">SPs1849</name>
</gene>
<name>HASC1_STRPQ</name>
<dbReference type="EC" id="2.7.7.9"/>
<dbReference type="EMBL" id="BA000034">
    <property type="protein sequence ID" value="BAC64944.1"/>
    <property type="molecule type" value="Genomic_DNA"/>
</dbReference>
<dbReference type="RefSeq" id="WP_002982024.1">
    <property type="nucleotide sequence ID" value="NC_004606.1"/>
</dbReference>
<dbReference type="SMR" id="P0DG71"/>
<dbReference type="GeneID" id="69901620"/>
<dbReference type="KEGG" id="sps:SPs1849"/>
<dbReference type="HOGENOM" id="CLU_029499_1_2_9"/>
<dbReference type="UniPathway" id="UPA00215"/>
<dbReference type="GO" id="GO:0003983">
    <property type="term" value="F:UTP:glucose-1-phosphate uridylyltransferase activity"/>
    <property type="evidence" value="ECO:0007669"/>
    <property type="project" value="UniProtKB-EC"/>
</dbReference>
<dbReference type="GO" id="GO:0009058">
    <property type="term" value="P:biosynthetic process"/>
    <property type="evidence" value="ECO:0007669"/>
    <property type="project" value="InterPro"/>
</dbReference>
<dbReference type="GO" id="GO:0006011">
    <property type="term" value="P:UDP-alpha-D-glucose metabolic process"/>
    <property type="evidence" value="ECO:0007669"/>
    <property type="project" value="InterPro"/>
</dbReference>
<dbReference type="CDD" id="cd02541">
    <property type="entry name" value="UGPase_prokaryotic"/>
    <property type="match status" value="1"/>
</dbReference>
<dbReference type="Gene3D" id="3.90.550.10">
    <property type="entry name" value="Spore Coat Polysaccharide Biosynthesis Protein SpsA, Chain A"/>
    <property type="match status" value="1"/>
</dbReference>
<dbReference type="InterPro" id="IPR005771">
    <property type="entry name" value="GalU_uridylyltTrfase_bac/arc"/>
</dbReference>
<dbReference type="InterPro" id="IPR005835">
    <property type="entry name" value="NTP_transferase_dom"/>
</dbReference>
<dbReference type="InterPro" id="IPR029044">
    <property type="entry name" value="Nucleotide-diphossugar_trans"/>
</dbReference>
<dbReference type="NCBIfam" id="TIGR01099">
    <property type="entry name" value="galU"/>
    <property type="match status" value="1"/>
</dbReference>
<dbReference type="PANTHER" id="PTHR43197">
    <property type="entry name" value="UTP--GLUCOSE-1-PHOSPHATE URIDYLYLTRANSFERASE"/>
    <property type="match status" value="1"/>
</dbReference>
<dbReference type="PANTHER" id="PTHR43197:SF1">
    <property type="entry name" value="UTP--GLUCOSE-1-PHOSPHATE URIDYLYLTRANSFERASE"/>
    <property type="match status" value="1"/>
</dbReference>
<dbReference type="Pfam" id="PF00483">
    <property type="entry name" value="NTP_transferase"/>
    <property type="match status" value="1"/>
</dbReference>
<dbReference type="SUPFAM" id="SSF53448">
    <property type="entry name" value="Nucleotide-diphospho-sugar transferases"/>
    <property type="match status" value="1"/>
</dbReference>
<keyword id="KW-0548">Nucleotidyltransferase</keyword>
<keyword id="KW-0808">Transferase</keyword>
<accession>P0DG71</accession>
<accession>Q79VY2</accession>
<accession>Q8K5G4</accession>
<proteinExistence type="inferred from homology"/>
<protein>
    <recommendedName>
        <fullName>UTP--glucose-1-phosphate uridylyltransferase 1</fullName>
        <ecNumber>2.7.7.9</ecNumber>
    </recommendedName>
    <alternativeName>
        <fullName>Alpha-D-glucosyl-1-phosphate uridylyltransferase 1</fullName>
    </alternativeName>
    <alternativeName>
        <fullName>UDP-glucose pyrophosphorylase 1</fullName>
        <shortName>UDPGP 1</shortName>
    </alternativeName>
    <alternativeName>
        <fullName>Uridine diphosphoglucose pyrophosphorylase 1</fullName>
    </alternativeName>
</protein>
<evidence type="ECO:0000305" key="1"/>